<protein>
    <recommendedName>
        <fullName evidence="1">GTPase Era</fullName>
    </recommendedName>
</protein>
<proteinExistence type="inferred from homology"/>
<name>ERA_FUSNN</name>
<evidence type="ECO:0000255" key="1">
    <source>
        <dbReference type="HAMAP-Rule" id="MF_00367"/>
    </source>
</evidence>
<evidence type="ECO:0000255" key="2">
    <source>
        <dbReference type="PROSITE-ProRule" id="PRU01050"/>
    </source>
</evidence>
<dbReference type="EMBL" id="AE009951">
    <property type="protein sequence ID" value="AAL94476.1"/>
    <property type="molecule type" value="Genomic_DNA"/>
</dbReference>
<dbReference type="RefSeq" id="NP_603177.1">
    <property type="nucleotide sequence ID" value="NC_003454.1"/>
</dbReference>
<dbReference type="RefSeq" id="WP_011016271.1">
    <property type="nucleotide sequence ID" value="NZ_OZ209243.1"/>
</dbReference>
<dbReference type="SMR" id="Q8RGM1"/>
<dbReference type="FunCoup" id="Q8RGM1">
    <property type="interactions" value="367"/>
</dbReference>
<dbReference type="STRING" id="190304.FN0270"/>
<dbReference type="PaxDb" id="190304-FN0270"/>
<dbReference type="EnsemblBacteria" id="AAL94476">
    <property type="protein sequence ID" value="AAL94476"/>
    <property type="gene ID" value="FN0270"/>
</dbReference>
<dbReference type="GeneID" id="79783282"/>
<dbReference type="KEGG" id="fnu:FN0270"/>
<dbReference type="PATRIC" id="fig|190304.8.peg.850"/>
<dbReference type="eggNOG" id="COG1159">
    <property type="taxonomic scope" value="Bacteria"/>
</dbReference>
<dbReference type="HOGENOM" id="CLU_038009_1_0_0"/>
<dbReference type="InParanoid" id="Q8RGM1"/>
<dbReference type="BioCyc" id="FNUC190304:G1FZS-869-MONOMER"/>
<dbReference type="Proteomes" id="UP000002521">
    <property type="component" value="Chromosome"/>
</dbReference>
<dbReference type="GO" id="GO:0005829">
    <property type="term" value="C:cytosol"/>
    <property type="evidence" value="ECO:0000318"/>
    <property type="project" value="GO_Central"/>
</dbReference>
<dbReference type="GO" id="GO:0005886">
    <property type="term" value="C:plasma membrane"/>
    <property type="evidence" value="ECO:0007669"/>
    <property type="project" value="UniProtKB-SubCell"/>
</dbReference>
<dbReference type="GO" id="GO:0005525">
    <property type="term" value="F:GTP binding"/>
    <property type="evidence" value="ECO:0007669"/>
    <property type="project" value="UniProtKB-UniRule"/>
</dbReference>
<dbReference type="GO" id="GO:0003924">
    <property type="term" value="F:GTPase activity"/>
    <property type="evidence" value="ECO:0007669"/>
    <property type="project" value="UniProtKB-UniRule"/>
</dbReference>
<dbReference type="GO" id="GO:0043024">
    <property type="term" value="F:ribosomal small subunit binding"/>
    <property type="evidence" value="ECO:0000318"/>
    <property type="project" value="GO_Central"/>
</dbReference>
<dbReference type="GO" id="GO:0019843">
    <property type="term" value="F:rRNA binding"/>
    <property type="evidence" value="ECO:0000318"/>
    <property type="project" value="GO_Central"/>
</dbReference>
<dbReference type="GO" id="GO:0070181">
    <property type="term" value="F:small ribosomal subunit rRNA binding"/>
    <property type="evidence" value="ECO:0007669"/>
    <property type="project" value="UniProtKB-UniRule"/>
</dbReference>
<dbReference type="GO" id="GO:0000028">
    <property type="term" value="P:ribosomal small subunit assembly"/>
    <property type="evidence" value="ECO:0000318"/>
    <property type="project" value="GO_Central"/>
</dbReference>
<dbReference type="CDD" id="cd04163">
    <property type="entry name" value="Era"/>
    <property type="match status" value="1"/>
</dbReference>
<dbReference type="CDD" id="cd22534">
    <property type="entry name" value="KH-II_Era"/>
    <property type="match status" value="1"/>
</dbReference>
<dbReference type="FunFam" id="3.30.300.20:FF:000003">
    <property type="entry name" value="GTPase Era"/>
    <property type="match status" value="1"/>
</dbReference>
<dbReference type="Gene3D" id="3.30.300.20">
    <property type="match status" value="1"/>
</dbReference>
<dbReference type="Gene3D" id="3.40.50.300">
    <property type="entry name" value="P-loop containing nucleotide triphosphate hydrolases"/>
    <property type="match status" value="1"/>
</dbReference>
<dbReference type="HAMAP" id="MF_00367">
    <property type="entry name" value="GTPase_Era"/>
    <property type="match status" value="1"/>
</dbReference>
<dbReference type="InterPro" id="IPR030388">
    <property type="entry name" value="G_ERA_dom"/>
</dbReference>
<dbReference type="InterPro" id="IPR006073">
    <property type="entry name" value="GTP-bd"/>
</dbReference>
<dbReference type="InterPro" id="IPR005662">
    <property type="entry name" value="GTPase_Era-like"/>
</dbReference>
<dbReference type="InterPro" id="IPR015946">
    <property type="entry name" value="KH_dom-like_a/b"/>
</dbReference>
<dbReference type="InterPro" id="IPR004044">
    <property type="entry name" value="KH_dom_type_2"/>
</dbReference>
<dbReference type="InterPro" id="IPR009019">
    <property type="entry name" value="KH_sf_prok-type"/>
</dbReference>
<dbReference type="InterPro" id="IPR027417">
    <property type="entry name" value="P-loop_NTPase"/>
</dbReference>
<dbReference type="InterPro" id="IPR005225">
    <property type="entry name" value="Small_GTP-bd"/>
</dbReference>
<dbReference type="NCBIfam" id="TIGR00436">
    <property type="entry name" value="era"/>
    <property type="match status" value="1"/>
</dbReference>
<dbReference type="NCBIfam" id="NF000908">
    <property type="entry name" value="PRK00089.1"/>
    <property type="match status" value="1"/>
</dbReference>
<dbReference type="NCBIfam" id="TIGR00231">
    <property type="entry name" value="small_GTP"/>
    <property type="match status" value="1"/>
</dbReference>
<dbReference type="PANTHER" id="PTHR42698">
    <property type="entry name" value="GTPASE ERA"/>
    <property type="match status" value="1"/>
</dbReference>
<dbReference type="PANTHER" id="PTHR42698:SF1">
    <property type="entry name" value="GTPASE ERA, MITOCHONDRIAL"/>
    <property type="match status" value="1"/>
</dbReference>
<dbReference type="Pfam" id="PF07650">
    <property type="entry name" value="KH_2"/>
    <property type="match status" value="1"/>
</dbReference>
<dbReference type="Pfam" id="PF01926">
    <property type="entry name" value="MMR_HSR1"/>
    <property type="match status" value="1"/>
</dbReference>
<dbReference type="PRINTS" id="PR00326">
    <property type="entry name" value="GTP1OBG"/>
</dbReference>
<dbReference type="SUPFAM" id="SSF52540">
    <property type="entry name" value="P-loop containing nucleoside triphosphate hydrolases"/>
    <property type="match status" value="1"/>
</dbReference>
<dbReference type="SUPFAM" id="SSF54814">
    <property type="entry name" value="Prokaryotic type KH domain (KH-domain type II)"/>
    <property type="match status" value="1"/>
</dbReference>
<dbReference type="PROSITE" id="PS51713">
    <property type="entry name" value="G_ERA"/>
    <property type="match status" value="1"/>
</dbReference>
<dbReference type="PROSITE" id="PS50823">
    <property type="entry name" value="KH_TYPE_2"/>
    <property type="match status" value="1"/>
</dbReference>
<accession>Q8RGM1</accession>
<comment type="function">
    <text evidence="1">An essential GTPase that binds both GDP and GTP, with rapid nucleotide exchange. Plays a role in 16S rRNA processing and 30S ribosomal subunit biogenesis and possibly also in cell cycle regulation and energy metabolism.</text>
</comment>
<comment type="subunit">
    <text evidence="1">Monomer.</text>
</comment>
<comment type="subcellular location">
    <subcellularLocation>
        <location>Cytoplasm</location>
    </subcellularLocation>
    <subcellularLocation>
        <location evidence="1">Cell inner membrane</location>
        <topology evidence="1">Peripheral membrane protein</topology>
    </subcellularLocation>
</comment>
<comment type="similarity">
    <text evidence="1 2">Belongs to the TRAFAC class TrmE-Era-EngA-EngB-Septin-like GTPase superfamily. Era GTPase family.</text>
</comment>
<gene>
    <name evidence="1" type="primary">era</name>
    <name type="ordered locus">FN0270</name>
</gene>
<sequence length="296" mass="33930">MKAGFIAVVGRPNVGKSTLINKLVSEKVAIVSDKAGTTRDNIKGILNFKDNQYIFIDTPGIHKPQHLLGEYMTNIAVKILKDVDIILFLIDASKPIGTGDMFVMDRINENSKKPRILLVNKVDLISDEQKEEKIKEIEEKLGKFDKIIFASGMYSFGISQLLEALDPYLEDGVKYYPDDMYTDMSTYRIITEIVREKILLKTRDEIPHSVAIEIINVERKEGKKDKFDINIYVERDSQKGIIIGKDGKMLKEIGVEARKEIEELLGEKIYLGLWVKVKDDWRKKKPFLKELGYVEE</sequence>
<keyword id="KW-0997">Cell inner membrane</keyword>
<keyword id="KW-1003">Cell membrane</keyword>
<keyword id="KW-0963">Cytoplasm</keyword>
<keyword id="KW-0342">GTP-binding</keyword>
<keyword id="KW-0472">Membrane</keyword>
<keyword id="KW-0547">Nucleotide-binding</keyword>
<keyword id="KW-1185">Reference proteome</keyword>
<keyword id="KW-0690">Ribosome biogenesis</keyword>
<keyword id="KW-0694">RNA-binding</keyword>
<keyword id="KW-0699">rRNA-binding</keyword>
<feature type="chain" id="PRO_0000180015" description="GTPase Era">
    <location>
        <begin position="1"/>
        <end position="296"/>
    </location>
</feature>
<feature type="domain" description="Era-type G" evidence="2">
    <location>
        <begin position="2"/>
        <end position="171"/>
    </location>
</feature>
<feature type="domain" description="KH type-2" evidence="1">
    <location>
        <begin position="202"/>
        <end position="279"/>
    </location>
</feature>
<feature type="region of interest" description="G1" evidence="2">
    <location>
        <begin position="10"/>
        <end position="17"/>
    </location>
</feature>
<feature type="region of interest" description="G2" evidence="2">
    <location>
        <begin position="36"/>
        <end position="40"/>
    </location>
</feature>
<feature type="region of interest" description="G3" evidence="2">
    <location>
        <begin position="57"/>
        <end position="60"/>
    </location>
</feature>
<feature type="region of interest" description="G4" evidence="2">
    <location>
        <begin position="120"/>
        <end position="123"/>
    </location>
</feature>
<feature type="region of interest" description="G5" evidence="2">
    <location>
        <begin position="150"/>
        <end position="152"/>
    </location>
</feature>
<feature type="binding site" evidence="1">
    <location>
        <begin position="10"/>
        <end position="17"/>
    </location>
    <ligand>
        <name>GTP</name>
        <dbReference type="ChEBI" id="CHEBI:37565"/>
    </ligand>
</feature>
<feature type="binding site" evidence="1">
    <location>
        <begin position="57"/>
        <end position="61"/>
    </location>
    <ligand>
        <name>GTP</name>
        <dbReference type="ChEBI" id="CHEBI:37565"/>
    </ligand>
</feature>
<feature type="binding site" evidence="1">
    <location>
        <begin position="120"/>
        <end position="123"/>
    </location>
    <ligand>
        <name>GTP</name>
        <dbReference type="ChEBI" id="CHEBI:37565"/>
    </ligand>
</feature>
<reference key="1">
    <citation type="journal article" date="2002" name="J. Bacteriol.">
        <title>Genome sequence and analysis of the oral bacterium Fusobacterium nucleatum strain ATCC 25586.</title>
        <authorList>
            <person name="Kapatral V."/>
            <person name="Anderson I."/>
            <person name="Ivanova N."/>
            <person name="Reznik G."/>
            <person name="Los T."/>
            <person name="Lykidis A."/>
            <person name="Bhattacharyya A."/>
            <person name="Bartman A."/>
            <person name="Gardner W."/>
            <person name="Grechkin G."/>
            <person name="Zhu L."/>
            <person name="Vasieva O."/>
            <person name="Chu L."/>
            <person name="Kogan Y."/>
            <person name="Chaga O."/>
            <person name="Goltsman E."/>
            <person name="Bernal A."/>
            <person name="Larsen N."/>
            <person name="D'Souza M."/>
            <person name="Walunas T."/>
            <person name="Pusch G."/>
            <person name="Haselkorn R."/>
            <person name="Fonstein M."/>
            <person name="Kyrpides N.C."/>
            <person name="Overbeek R."/>
        </authorList>
    </citation>
    <scope>NUCLEOTIDE SEQUENCE [LARGE SCALE GENOMIC DNA]</scope>
    <source>
        <strain>ATCC 25586 / DSM 15643 / BCRC 10681 / CIP 101130 / JCM 8532 / KCTC 2640 / LMG 13131 / VPI 4355</strain>
    </source>
</reference>
<organism>
    <name type="scientific">Fusobacterium nucleatum subsp. nucleatum (strain ATCC 25586 / DSM 15643 / BCRC 10681 / CIP 101130 / JCM 8532 / KCTC 2640 / LMG 13131 / VPI 4355)</name>
    <dbReference type="NCBI Taxonomy" id="190304"/>
    <lineage>
        <taxon>Bacteria</taxon>
        <taxon>Fusobacteriati</taxon>
        <taxon>Fusobacteriota</taxon>
        <taxon>Fusobacteriia</taxon>
        <taxon>Fusobacteriales</taxon>
        <taxon>Fusobacteriaceae</taxon>
        <taxon>Fusobacterium</taxon>
    </lineage>
</organism>